<name>APHA_MARMS</name>
<gene>
    <name evidence="1" type="primary">aphA</name>
    <name type="ordered locus">Mmwyl1_3860</name>
</gene>
<dbReference type="EC" id="3.1.3.2" evidence="1 3"/>
<dbReference type="EMBL" id="CP000749">
    <property type="protein sequence ID" value="ABR72759.1"/>
    <property type="molecule type" value="Genomic_DNA"/>
</dbReference>
<dbReference type="SMR" id="A6W230"/>
<dbReference type="STRING" id="400668.Mmwyl1_3860"/>
<dbReference type="KEGG" id="mmw:Mmwyl1_3860"/>
<dbReference type="eggNOG" id="COG3700">
    <property type="taxonomic scope" value="Bacteria"/>
</dbReference>
<dbReference type="HOGENOM" id="CLU_081496_0_0_6"/>
<dbReference type="OrthoDB" id="2234478at2"/>
<dbReference type="GO" id="GO:0030288">
    <property type="term" value="C:outer membrane-bounded periplasmic space"/>
    <property type="evidence" value="ECO:0007669"/>
    <property type="project" value="InterPro"/>
</dbReference>
<dbReference type="GO" id="GO:0003993">
    <property type="term" value="F:acid phosphatase activity"/>
    <property type="evidence" value="ECO:0007669"/>
    <property type="project" value="UniProtKB-EC"/>
</dbReference>
<dbReference type="GO" id="GO:0046872">
    <property type="term" value="F:metal ion binding"/>
    <property type="evidence" value="ECO:0007669"/>
    <property type="project" value="UniProtKB-KW"/>
</dbReference>
<dbReference type="CDD" id="cd07499">
    <property type="entry name" value="HAD_CBAP"/>
    <property type="match status" value="1"/>
</dbReference>
<dbReference type="Gene3D" id="3.40.50.1000">
    <property type="entry name" value="HAD superfamily/HAD-like"/>
    <property type="match status" value="1"/>
</dbReference>
<dbReference type="InterPro" id="IPR005519">
    <property type="entry name" value="Acid_phosphat_B-like"/>
</dbReference>
<dbReference type="InterPro" id="IPR036412">
    <property type="entry name" value="HAD-like_sf"/>
</dbReference>
<dbReference type="InterPro" id="IPR010025">
    <property type="entry name" value="HAD-SF_ppase_IIIB_AphA"/>
</dbReference>
<dbReference type="InterPro" id="IPR023214">
    <property type="entry name" value="HAD_sf"/>
</dbReference>
<dbReference type="NCBIfam" id="TIGR01672">
    <property type="entry name" value="AphA"/>
    <property type="match status" value="1"/>
</dbReference>
<dbReference type="Pfam" id="PF03767">
    <property type="entry name" value="Acid_phosphat_B"/>
    <property type="match status" value="1"/>
</dbReference>
<dbReference type="PIRSF" id="PIRSF017818">
    <property type="entry name" value="Acid_Ptase_B"/>
    <property type="match status" value="1"/>
</dbReference>
<dbReference type="SFLD" id="SFLDG01127">
    <property type="entry name" value="C1.3:_Acid_Phosphatase_Like"/>
    <property type="match status" value="1"/>
</dbReference>
<dbReference type="SFLD" id="SFLDS00003">
    <property type="entry name" value="Haloacid_Dehalogenase"/>
    <property type="match status" value="1"/>
</dbReference>
<dbReference type="SUPFAM" id="SSF56784">
    <property type="entry name" value="HAD-like"/>
    <property type="match status" value="1"/>
</dbReference>
<sequence length="236" mass="26223">MNHTLRSITLVLACVASLSANADPKTPGTHKGYSTIDMTTAGMPADVKMISVADIQKELQGKAPFAVGFDIDDTTLFSTPVFYRGQQEFSPNGYSYLTNQDFWDKANCGWDAFSMPKNIAKELIAMHQERGDSIYFITGRTGSDCNFTTEYLKKTFDIKDMHDVIFAGSSRTEYTKTKYIKNNDIKIYYGDADGDIISARDAGAEGIRVMRAANSSYTPIPKNGIYGERVLKDSQY</sequence>
<feature type="signal peptide" evidence="2">
    <location>
        <begin position="1"/>
        <end position="22"/>
    </location>
</feature>
<feature type="chain" id="PRO_5000259712" description="Class B acid phosphatase" evidence="2">
    <location>
        <begin position="23"/>
        <end position="236"/>
    </location>
</feature>
<feature type="active site" description="Nucleophile" evidence="1">
    <location>
        <position position="70"/>
    </location>
</feature>
<feature type="active site" description="Proton donor" evidence="1">
    <location>
        <position position="72"/>
    </location>
</feature>
<feature type="binding site" evidence="1">
    <location>
        <position position="70"/>
    </location>
    <ligand>
        <name>Mg(2+)</name>
        <dbReference type="ChEBI" id="CHEBI:18420"/>
    </ligand>
</feature>
<feature type="binding site" evidence="1">
    <location>
        <position position="72"/>
    </location>
    <ligand>
        <name>Mg(2+)</name>
        <dbReference type="ChEBI" id="CHEBI:18420"/>
    </ligand>
</feature>
<feature type="binding site" evidence="1">
    <location>
        <begin position="138"/>
        <end position="139"/>
    </location>
    <ligand>
        <name>substrate</name>
    </ligand>
</feature>
<feature type="binding site" evidence="1">
    <location>
        <position position="176"/>
    </location>
    <ligand>
        <name>substrate</name>
    </ligand>
</feature>
<feature type="binding site" evidence="1">
    <location>
        <position position="191"/>
    </location>
    <ligand>
        <name>Mg(2+)</name>
        <dbReference type="ChEBI" id="CHEBI:18420"/>
    </ligand>
</feature>
<accession>A6W230</accession>
<comment type="function">
    <text evidence="1">Dephosphorylates several organic phosphate monoesters. Also has a phosphotransferase activity catalyzing the transfer of low-energy phosphate groups from organic phosphate monoesters to free hydroxyl groups of various organic compounds (By similarity).</text>
</comment>
<comment type="catalytic activity">
    <reaction evidence="1">
        <text>a phosphate monoester + H2O = an alcohol + phosphate</text>
        <dbReference type="Rhea" id="RHEA:15017"/>
        <dbReference type="ChEBI" id="CHEBI:15377"/>
        <dbReference type="ChEBI" id="CHEBI:30879"/>
        <dbReference type="ChEBI" id="CHEBI:43474"/>
        <dbReference type="ChEBI" id="CHEBI:67140"/>
        <dbReference type="EC" id="3.1.3.2"/>
    </reaction>
</comment>
<comment type="cofactor">
    <cofactor evidence="1">
        <name>Mg(2+)</name>
        <dbReference type="ChEBI" id="CHEBI:18420"/>
    </cofactor>
    <text evidence="1">Binds 1 Mg(2+) ion per subunit.</text>
</comment>
<comment type="subunit">
    <text evidence="1">Homotetramer.</text>
</comment>
<comment type="subcellular location">
    <subcellularLocation>
        <location evidence="1">Periplasm</location>
    </subcellularLocation>
</comment>
<comment type="similarity">
    <text evidence="1">Belongs to the class B bacterial acid phosphatase family.</text>
</comment>
<proteinExistence type="inferred from homology"/>
<keyword id="KW-0378">Hydrolase</keyword>
<keyword id="KW-0460">Magnesium</keyword>
<keyword id="KW-0479">Metal-binding</keyword>
<keyword id="KW-0574">Periplasm</keyword>
<keyword id="KW-0732">Signal</keyword>
<evidence type="ECO:0000250" key="1">
    <source>
        <dbReference type="UniProtKB" id="P0AE22"/>
    </source>
</evidence>
<evidence type="ECO:0000255" key="2"/>
<evidence type="ECO:0000312" key="3">
    <source>
        <dbReference type="EMBL" id="ABR72759.1"/>
    </source>
</evidence>
<organism>
    <name type="scientific">Marinomonas sp. (strain MWYL1)</name>
    <dbReference type="NCBI Taxonomy" id="400668"/>
    <lineage>
        <taxon>Bacteria</taxon>
        <taxon>Pseudomonadati</taxon>
        <taxon>Pseudomonadota</taxon>
        <taxon>Gammaproteobacteria</taxon>
        <taxon>Oceanospirillales</taxon>
        <taxon>Oceanospirillaceae</taxon>
        <taxon>Marinomonas</taxon>
    </lineage>
</organism>
<reference evidence="3" key="1">
    <citation type="submission" date="2007-06" db="EMBL/GenBank/DDBJ databases">
        <title>Complete sequence of Marinomonas sp. MWYL1.</title>
        <authorList>
            <consortium name="US DOE Joint Genome Institute"/>
            <person name="Copeland A."/>
            <person name="Lucas S."/>
            <person name="Lapidus A."/>
            <person name="Barry K."/>
            <person name="Glavina del Rio T."/>
            <person name="Dalin E."/>
            <person name="Tice H."/>
            <person name="Pitluck S."/>
            <person name="Kiss H."/>
            <person name="Brettin T."/>
            <person name="Bruce D."/>
            <person name="Detter J.C."/>
            <person name="Han C."/>
            <person name="Schmutz J."/>
            <person name="Larimer F."/>
            <person name="Land M."/>
            <person name="Hauser L."/>
            <person name="Kyrpides N."/>
            <person name="Kim E."/>
            <person name="Johnston A.W.B."/>
            <person name="Todd J.D."/>
            <person name="Rogers R."/>
            <person name="Wexler M."/>
            <person name="Bond P.L."/>
            <person name="Li Y."/>
            <person name="Richardson P."/>
        </authorList>
    </citation>
    <scope>NUCLEOTIDE SEQUENCE [LARGE SCALE GENOMIC DNA]</scope>
    <source>
        <strain>MWYL1</strain>
    </source>
</reference>
<protein>
    <recommendedName>
        <fullName evidence="1">Class B acid phosphatase</fullName>
        <shortName evidence="1">CBAP</shortName>
        <ecNumber evidence="1 3">3.1.3.2</ecNumber>
    </recommendedName>
</protein>